<dbReference type="EMBL" id="CP001127">
    <property type="protein sequence ID" value="ACF89104.1"/>
    <property type="molecule type" value="Genomic_DNA"/>
</dbReference>
<dbReference type="RefSeq" id="WP_001518569.1">
    <property type="nucleotide sequence ID" value="NC_011094.1"/>
</dbReference>
<dbReference type="SMR" id="B4TS67"/>
<dbReference type="GeneID" id="66757102"/>
<dbReference type="KEGG" id="sew:SeSA_A2883"/>
<dbReference type="HOGENOM" id="CLU_108953_3_0_6"/>
<dbReference type="Proteomes" id="UP000001865">
    <property type="component" value="Chromosome"/>
</dbReference>
<dbReference type="GO" id="GO:0005829">
    <property type="term" value="C:cytosol"/>
    <property type="evidence" value="ECO:0007669"/>
    <property type="project" value="TreeGrafter"/>
</dbReference>
<dbReference type="GO" id="GO:0003723">
    <property type="term" value="F:RNA binding"/>
    <property type="evidence" value="ECO:0007669"/>
    <property type="project" value="UniProtKB-UniRule"/>
</dbReference>
<dbReference type="GO" id="GO:0070929">
    <property type="term" value="P:trans-translation"/>
    <property type="evidence" value="ECO:0007669"/>
    <property type="project" value="UniProtKB-UniRule"/>
</dbReference>
<dbReference type="CDD" id="cd09294">
    <property type="entry name" value="SmpB"/>
    <property type="match status" value="1"/>
</dbReference>
<dbReference type="FunFam" id="2.40.280.10:FF:000001">
    <property type="entry name" value="SsrA-binding protein"/>
    <property type="match status" value="1"/>
</dbReference>
<dbReference type="Gene3D" id="2.40.280.10">
    <property type="match status" value="1"/>
</dbReference>
<dbReference type="HAMAP" id="MF_00023">
    <property type="entry name" value="SmpB"/>
    <property type="match status" value="1"/>
</dbReference>
<dbReference type="InterPro" id="IPR023620">
    <property type="entry name" value="SmpB"/>
</dbReference>
<dbReference type="InterPro" id="IPR000037">
    <property type="entry name" value="SsrA-bd_prot"/>
</dbReference>
<dbReference type="InterPro" id="IPR020081">
    <property type="entry name" value="SsrA-bd_prot_CS"/>
</dbReference>
<dbReference type="NCBIfam" id="NF003843">
    <property type="entry name" value="PRK05422.1"/>
    <property type="match status" value="1"/>
</dbReference>
<dbReference type="NCBIfam" id="TIGR00086">
    <property type="entry name" value="smpB"/>
    <property type="match status" value="1"/>
</dbReference>
<dbReference type="PANTHER" id="PTHR30308:SF2">
    <property type="entry name" value="SSRA-BINDING PROTEIN"/>
    <property type="match status" value="1"/>
</dbReference>
<dbReference type="PANTHER" id="PTHR30308">
    <property type="entry name" value="TMRNA-BINDING COMPONENT OF TRANS-TRANSLATION TAGGING COMPLEX"/>
    <property type="match status" value="1"/>
</dbReference>
<dbReference type="Pfam" id="PF01668">
    <property type="entry name" value="SmpB"/>
    <property type="match status" value="1"/>
</dbReference>
<dbReference type="SUPFAM" id="SSF74982">
    <property type="entry name" value="Small protein B (SmpB)"/>
    <property type="match status" value="1"/>
</dbReference>
<dbReference type="PROSITE" id="PS01317">
    <property type="entry name" value="SSRP"/>
    <property type="match status" value="1"/>
</dbReference>
<feature type="chain" id="PRO_1000090185" description="SsrA-binding protein">
    <location>
        <begin position="1"/>
        <end position="160"/>
    </location>
</feature>
<name>SSRP_SALSV</name>
<organism>
    <name type="scientific">Salmonella schwarzengrund (strain CVM19633)</name>
    <dbReference type="NCBI Taxonomy" id="439843"/>
    <lineage>
        <taxon>Bacteria</taxon>
        <taxon>Pseudomonadati</taxon>
        <taxon>Pseudomonadota</taxon>
        <taxon>Gammaproteobacteria</taxon>
        <taxon>Enterobacterales</taxon>
        <taxon>Enterobacteriaceae</taxon>
        <taxon>Salmonella</taxon>
    </lineage>
</organism>
<reference key="1">
    <citation type="journal article" date="2011" name="J. Bacteriol.">
        <title>Comparative genomics of 28 Salmonella enterica isolates: evidence for CRISPR-mediated adaptive sublineage evolution.</title>
        <authorList>
            <person name="Fricke W.F."/>
            <person name="Mammel M.K."/>
            <person name="McDermott P.F."/>
            <person name="Tartera C."/>
            <person name="White D.G."/>
            <person name="Leclerc J.E."/>
            <person name="Ravel J."/>
            <person name="Cebula T.A."/>
        </authorList>
    </citation>
    <scope>NUCLEOTIDE SEQUENCE [LARGE SCALE GENOMIC DNA]</scope>
    <source>
        <strain>CVM19633</strain>
    </source>
</reference>
<proteinExistence type="inferred from homology"/>
<accession>B4TS67</accession>
<evidence type="ECO:0000255" key="1">
    <source>
        <dbReference type="HAMAP-Rule" id="MF_00023"/>
    </source>
</evidence>
<comment type="function">
    <text evidence="1">Required for rescue of stalled ribosomes mediated by trans-translation. Binds to transfer-messenger RNA (tmRNA), required for stable association of tmRNA with ribosomes. tmRNA and SmpB together mimic tRNA shape, replacing the anticodon stem-loop with SmpB. tmRNA is encoded by the ssrA gene; the 2 termini fold to resemble tRNA(Ala) and it encodes a 'tag peptide', a short internal open reading frame. During trans-translation Ala-aminoacylated tmRNA acts like a tRNA, entering the A-site of stalled ribosomes, displacing the stalled mRNA. The ribosome then switches to translate the ORF on the tmRNA; the nascent peptide is terminated with the 'tag peptide' encoded by the tmRNA and targeted for degradation. The ribosome is freed to recommence translation, which seems to be the essential function of trans-translation.</text>
</comment>
<comment type="subcellular location">
    <subcellularLocation>
        <location evidence="1">Cytoplasm</location>
    </subcellularLocation>
    <text evidence="1">The tmRNA-SmpB complex associates with stalled 70S ribosomes.</text>
</comment>
<comment type="similarity">
    <text evidence="1">Belongs to the SmpB family.</text>
</comment>
<protein>
    <recommendedName>
        <fullName evidence="1">SsrA-binding protein</fullName>
    </recommendedName>
    <alternativeName>
        <fullName evidence="1">Small protein B</fullName>
    </alternativeName>
</protein>
<sequence>MTKKKAHKPGSATIALNKRARHEYFIEEEFEAGLALQGWEVKSLRAGKANIGDSYVILKDGEAWLFGANFTPMAVASTHVVCDPTRTRKLLLNQRELDSLYGRINREGYTVVALSLYWKNAWCKVKIGVAKGKKQHDKRSDLKEREWQLDKARIMKNAGR</sequence>
<keyword id="KW-0963">Cytoplasm</keyword>
<keyword id="KW-0694">RNA-binding</keyword>
<gene>
    <name evidence="1" type="primary">smpB</name>
    <name type="ordered locus">SeSA_A2883</name>
</gene>